<organism>
    <name type="scientific">Epstein-Barr virus (strain AG876)</name>
    <name type="common">HHV-4</name>
    <name type="synonym">Human herpesvirus 4</name>
    <dbReference type="NCBI Taxonomy" id="82830"/>
    <lineage>
        <taxon>Viruses</taxon>
        <taxon>Duplodnaviria</taxon>
        <taxon>Heunggongvirae</taxon>
        <taxon>Peploviricota</taxon>
        <taxon>Herviviricetes</taxon>
        <taxon>Herpesvirales</taxon>
        <taxon>Orthoherpesviridae</taxon>
        <taxon>Gammaherpesvirinae</taxon>
        <taxon>Lymphocryptovirus</taxon>
        <taxon>Lymphocryptovirus humangamma4</taxon>
        <taxon>Epstein-Barr virus (strain GD1)</taxon>
    </lineage>
</organism>
<reference key="1">
    <citation type="journal article" date="2006" name="Virology">
        <title>The genome of Epstein-Barr virus type 2 strain AG876.</title>
        <authorList>
            <person name="Dolan A."/>
            <person name="Addison C."/>
            <person name="Gatherer D."/>
            <person name="Davison A.J."/>
            <person name="McGeoch D.J."/>
        </authorList>
    </citation>
    <scope>NUCLEOTIDE SEQUENCE [LARGE SCALE GENOMIC DNA]</scope>
    <source>
        <strain>Raji</strain>
    </source>
</reference>
<gene>
    <name type="primary">LF2</name>
</gene>
<feature type="chain" id="PRO_0000382451" description="Protein LF2">
    <location>
        <begin position="1"/>
        <end position="429"/>
    </location>
</feature>
<proteinExistence type="inferred from homology"/>
<name>LF2_EBVA8</name>
<organismHost>
    <name type="scientific">Homo sapiens</name>
    <name type="common">Human</name>
    <dbReference type="NCBI Taxonomy" id="9606"/>
</organismHost>
<comment type="function">
    <text evidence="1">Prevents the establishment of cellular antiviral state by blocking the cellular IRF7-mediated innate immunity. May also inhibit viral replication by modulating BRLF1 activity (By similarity).</text>
</comment>
<comment type="subunit">
    <text evidence="1">Interacts with host IRF7; this interaction inhibits IRF7 dimerization, thereby altering its function in immunity. Interacts with BRLF1; this interaction modulates BRLF1 function (By similarity).</text>
</comment>
<comment type="similarity">
    <text evidence="2">Belongs to the epstein-barr virus LF2 family.</text>
</comment>
<evidence type="ECO:0000250" key="1"/>
<evidence type="ECO:0000305" key="2"/>
<sequence>MAEAYPGGAHAALASRRSSFRNSLRRLRPTEKPDTSFMRGVWKYEIFPSYVRVTNKQVLQLDAQCQELPPCPSVGQILSFKLPSFSFNTTTYGSRYFTVAFLFFGAEDNEVFLKPFFVMHSDQDIVLSVLNPRSLFIEKGKFTWYIVPIRLVKNPYLYLQILPGQSDIQLTRSCTQSGDKLNTSEPQIFLSGSPVTSQDECLPYLLAQHTPPFLKSYARIHTFPGKVCPVNAIRRGKGYVRVSVDTPDLKREGPLNVKVGMTLLDDVIIAFRYNPYPKSHWRWDGESTDIRYFGSPVIIPPNFITELEYNNTYEAPLSSKITAVVVSHSSNPVFYVYPQEWKPGQTLKLTVRNISNNPITIVTGQSMAQAFFIYAGDPSISTIMRRYIQRQGCALTLPGNIVVESSSLPTFERINKTFNGNIVASEGTL</sequence>
<accession>P0C726</accession>
<accession>Q99306</accession>
<protein>
    <recommendedName>
        <fullName>Protein LF2</fullName>
    </recommendedName>
</protein>
<dbReference type="EMBL" id="DQ279927">
    <property type="protein sequence ID" value="ABB89283.1"/>
    <property type="molecule type" value="Genomic_DNA"/>
</dbReference>
<dbReference type="PIR" id="S27924">
    <property type="entry name" value="S27924"/>
</dbReference>
<dbReference type="RefSeq" id="YP_001129504.1">
    <property type="nucleotide sequence ID" value="NC_009334.1"/>
</dbReference>
<dbReference type="RefSeq" id="YP_401708.1">
    <property type="nucleotide sequence ID" value="NC_007605.1"/>
</dbReference>
<dbReference type="SMR" id="P0C726"/>
<dbReference type="DNASU" id="3783748"/>
<dbReference type="GeneID" id="3783748"/>
<dbReference type="KEGG" id="vg:3783748"/>
<dbReference type="KEGG" id="vg:5176211"/>
<dbReference type="Proteomes" id="UP000007639">
    <property type="component" value="Genome"/>
</dbReference>
<dbReference type="GO" id="GO:0052170">
    <property type="term" value="P:symbiont-mediated suppression of host innate immune response"/>
    <property type="evidence" value="ECO:0007669"/>
    <property type="project" value="UniProtKB-KW"/>
</dbReference>
<dbReference type="InterPro" id="IPR006882">
    <property type="entry name" value="Herpes_Orf11"/>
</dbReference>
<dbReference type="Pfam" id="PF04797">
    <property type="entry name" value="Herpes_ORF11"/>
    <property type="match status" value="1"/>
</dbReference>
<keyword id="KW-0945">Host-virus interaction</keyword>
<keyword id="KW-1090">Inhibition of host innate immune response by virus</keyword>
<keyword id="KW-0922">Interferon antiviral system evasion</keyword>
<keyword id="KW-1185">Reference proteome</keyword>
<keyword id="KW-0899">Viral immunoevasion</keyword>